<evidence type="ECO:0000250" key="1"/>
<evidence type="ECO:0000255" key="2">
    <source>
        <dbReference type="HAMAP-Rule" id="MF_00403"/>
    </source>
</evidence>
<evidence type="ECO:0000256" key="3">
    <source>
        <dbReference type="SAM" id="MobiDB-lite"/>
    </source>
</evidence>
<evidence type="ECO:0000305" key="4"/>
<gene>
    <name evidence="2" type="primary">rpsL</name>
    <name type="ordered locus">Bamb_0262</name>
</gene>
<feature type="chain" id="PRO_0000295961" description="Small ribosomal subunit protein uS12">
    <location>
        <begin position="1"/>
        <end position="126"/>
    </location>
</feature>
<feature type="region of interest" description="Disordered" evidence="3">
    <location>
        <begin position="1"/>
        <end position="28"/>
    </location>
</feature>
<feature type="region of interest" description="Disordered" evidence="3">
    <location>
        <begin position="103"/>
        <end position="126"/>
    </location>
</feature>
<feature type="compositionally biased region" description="Basic residues" evidence="3">
    <location>
        <begin position="113"/>
        <end position="126"/>
    </location>
</feature>
<feature type="modified residue" description="3-methylthioaspartic acid" evidence="1">
    <location>
        <position position="89"/>
    </location>
</feature>
<reference key="1">
    <citation type="submission" date="2006-08" db="EMBL/GenBank/DDBJ databases">
        <title>Complete sequence of chromosome 1 of Burkholderia cepacia AMMD.</title>
        <authorList>
            <person name="Copeland A."/>
            <person name="Lucas S."/>
            <person name="Lapidus A."/>
            <person name="Barry K."/>
            <person name="Detter J.C."/>
            <person name="Glavina del Rio T."/>
            <person name="Hammon N."/>
            <person name="Israni S."/>
            <person name="Pitluck S."/>
            <person name="Bruce D."/>
            <person name="Chain P."/>
            <person name="Malfatti S."/>
            <person name="Shin M."/>
            <person name="Vergez L."/>
            <person name="Schmutz J."/>
            <person name="Larimer F."/>
            <person name="Land M."/>
            <person name="Hauser L."/>
            <person name="Kyrpides N."/>
            <person name="Kim E."/>
            <person name="Parke J."/>
            <person name="Coenye T."/>
            <person name="Konstantinidis K."/>
            <person name="Ramette A."/>
            <person name="Tiedje J."/>
            <person name="Richardson P."/>
        </authorList>
    </citation>
    <scope>NUCLEOTIDE SEQUENCE [LARGE SCALE GENOMIC DNA]</scope>
    <source>
        <strain>ATCC BAA-244 / DSM 16087 / CCUG 44356 / LMG 19182 / AMMD</strain>
    </source>
</reference>
<protein>
    <recommendedName>
        <fullName evidence="2">Small ribosomal subunit protein uS12</fullName>
    </recommendedName>
    <alternativeName>
        <fullName evidence="4">30S ribosomal protein S12</fullName>
    </alternativeName>
</protein>
<keyword id="KW-0488">Methylation</keyword>
<keyword id="KW-0687">Ribonucleoprotein</keyword>
<keyword id="KW-0689">Ribosomal protein</keyword>
<keyword id="KW-0694">RNA-binding</keyword>
<keyword id="KW-0699">rRNA-binding</keyword>
<keyword id="KW-0820">tRNA-binding</keyword>
<accession>Q0BJ51</accession>
<dbReference type="EMBL" id="CP000440">
    <property type="protein sequence ID" value="ABI85822.1"/>
    <property type="molecule type" value="Genomic_DNA"/>
</dbReference>
<dbReference type="RefSeq" id="WP_006400662.1">
    <property type="nucleotide sequence ID" value="NZ_CP009798.1"/>
</dbReference>
<dbReference type="SMR" id="Q0BJ51"/>
<dbReference type="GeneID" id="98108172"/>
<dbReference type="KEGG" id="bam:Bamb_0262"/>
<dbReference type="PATRIC" id="fig|339670.21.peg.1358"/>
<dbReference type="eggNOG" id="COG0048">
    <property type="taxonomic scope" value="Bacteria"/>
</dbReference>
<dbReference type="Proteomes" id="UP000000662">
    <property type="component" value="Chromosome 1"/>
</dbReference>
<dbReference type="GO" id="GO:0015935">
    <property type="term" value="C:small ribosomal subunit"/>
    <property type="evidence" value="ECO:0007669"/>
    <property type="project" value="InterPro"/>
</dbReference>
<dbReference type="GO" id="GO:0019843">
    <property type="term" value="F:rRNA binding"/>
    <property type="evidence" value="ECO:0007669"/>
    <property type="project" value="UniProtKB-UniRule"/>
</dbReference>
<dbReference type="GO" id="GO:0003735">
    <property type="term" value="F:structural constituent of ribosome"/>
    <property type="evidence" value="ECO:0007669"/>
    <property type="project" value="InterPro"/>
</dbReference>
<dbReference type="GO" id="GO:0000049">
    <property type="term" value="F:tRNA binding"/>
    <property type="evidence" value="ECO:0007669"/>
    <property type="project" value="UniProtKB-UniRule"/>
</dbReference>
<dbReference type="GO" id="GO:0006412">
    <property type="term" value="P:translation"/>
    <property type="evidence" value="ECO:0007669"/>
    <property type="project" value="UniProtKB-UniRule"/>
</dbReference>
<dbReference type="CDD" id="cd03368">
    <property type="entry name" value="Ribosomal_S12"/>
    <property type="match status" value="1"/>
</dbReference>
<dbReference type="FunFam" id="2.40.50.140:FF:000001">
    <property type="entry name" value="30S ribosomal protein S12"/>
    <property type="match status" value="1"/>
</dbReference>
<dbReference type="Gene3D" id="2.40.50.140">
    <property type="entry name" value="Nucleic acid-binding proteins"/>
    <property type="match status" value="1"/>
</dbReference>
<dbReference type="HAMAP" id="MF_00403_B">
    <property type="entry name" value="Ribosomal_uS12_B"/>
    <property type="match status" value="1"/>
</dbReference>
<dbReference type="InterPro" id="IPR012340">
    <property type="entry name" value="NA-bd_OB-fold"/>
</dbReference>
<dbReference type="InterPro" id="IPR006032">
    <property type="entry name" value="Ribosomal_uS12"/>
</dbReference>
<dbReference type="InterPro" id="IPR005679">
    <property type="entry name" value="Ribosomal_uS12_bac"/>
</dbReference>
<dbReference type="NCBIfam" id="TIGR00981">
    <property type="entry name" value="rpsL_bact"/>
    <property type="match status" value="1"/>
</dbReference>
<dbReference type="PANTHER" id="PTHR11652">
    <property type="entry name" value="30S RIBOSOMAL PROTEIN S12 FAMILY MEMBER"/>
    <property type="match status" value="1"/>
</dbReference>
<dbReference type="Pfam" id="PF00164">
    <property type="entry name" value="Ribosom_S12_S23"/>
    <property type="match status" value="1"/>
</dbReference>
<dbReference type="PIRSF" id="PIRSF002133">
    <property type="entry name" value="Ribosomal_S12/S23"/>
    <property type="match status" value="1"/>
</dbReference>
<dbReference type="PRINTS" id="PR01034">
    <property type="entry name" value="RIBOSOMALS12"/>
</dbReference>
<dbReference type="SUPFAM" id="SSF50249">
    <property type="entry name" value="Nucleic acid-binding proteins"/>
    <property type="match status" value="1"/>
</dbReference>
<dbReference type="PROSITE" id="PS00055">
    <property type="entry name" value="RIBOSOMAL_S12"/>
    <property type="match status" value="1"/>
</dbReference>
<sequence>MPTINQLVRKGRQSETTKSKSPALQDCPQRRGVCTRVYTTTPKKPNSALRKVAKVRLTNGFEVISYIGGEGHNLQEHSVVLIRGGRVKDLPGVRYHMVRGSLDTQGVKDRKQARSKYGAKRAKAAK</sequence>
<comment type="function">
    <text evidence="2">With S4 and S5 plays an important role in translational accuracy.</text>
</comment>
<comment type="function">
    <text evidence="2">Interacts with and stabilizes bases of the 16S rRNA that are involved in tRNA selection in the A site and with the mRNA backbone. Located at the interface of the 30S and 50S subunits, it traverses the body of the 30S subunit contacting proteins on the other side and probably holding the rRNA structure together. The combined cluster of proteins S8, S12 and S17 appears to hold together the shoulder and platform of the 30S subunit.</text>
</comment>
<comment type="subunit">
    <text evidence="2">Part of the 30S ribosomal subunit. Contacts proteins S8 and S17. May interact with IF1 in the 30S initiation complex.</text>
</comment>
<comment type="similarity">
    <text evidence="2">Belongs to the universal ribosomal protein uS12 family.</text>
</comment>
<name>RS12_BURCM</name>
<organism>
    <name type="scientific">Burkholderia ambifaria (strain ATCC BAA-244 / DSM 16087 / CCUG 44356 / LMG 19182 / AMMD)</name>
    <name type="common">Burkholderia cepacia (strain AMMD)</name>
    <dbReference type="NCBI Taxonomy" id="339670"/>
    <lineage>
        <taxon>Bacteria</taxon>
        <taxon>Pseudomonadati</taxon>
        <taxon>Pseudomonadota</taxon>
        <taxon>Betaproteobacteria</taxon>
        <taxon>Burkholderiales</taxon>
        <taxon>Burkholderiaceae</taxon>
        <taxon>Burkholderia</taxon>
        <taxon>Burkholderia cepacia complex</taxon>
    </lineage>
</organism>
<proteinExistence type="inferred from homology"/>